<protein>
    <recommendedName>
        <fullName evidence="1">NADH-quinone oxidoreductase subunit C</fullName>
        <ecNumber evidence="1">7.1.1.-</ecNumber>
    </recommendedName>
    <alternativeName>
        <fullName evidence="1">NADH dehydrogenase I subunit C</fullName>
    </alternativeName>
    <alternativeName>
        <fullName evidence="1">NDH-1 subunit C</fullName>
    </alternativeName>
</protein>
<gene>
    <name evidence="1" type="primary">nuoC</name>
    <name type="ordered locus">BPSL1213</name>
</gene>
<evidence type="ECO:0000255" key="1">
    <source>
        <dbReference type="HAMAP-Rule" id="MF_01357"/>
    </source>
</evidence>
<name>NUOC_BURPS</name>
<reference key="1">
    <citation type="journal article" date="2004" name="Proc. Natl. Acad. Sci. U.S.A.">
        <title>Genomic plasticity of the causative agent of melioidosis, Burkholderia pseudomallei.</title>
        <authorList>
            <person name="Holden M.T.G."/>
            <person name="Titball R.W."/>
            <person name="Peacock S.J."/>
            <person name="Cerdeno-Tarraga A.-M."/>
            <person name="Atkins T."/>
            <person name="Crossman L.C."/>
            <person name="Pitt T."/>
            <person name="Churcher C."/>
            <person name="Mungall K.L."/>
            <person name="Bentley S.D."/>
            <person name="Sebaihia M."/>
            <person name="Thomson N.R."/>
            <person name="Bason N."/>
            <person name="Beacham I.R."/>
            <person name="Brooks K."/>
            <person name="Brown K.A."/>
            <person name="Brown N.F."/>
            <person name="Challis G.L."/>
            <person name="Cherevach I."/>
            <person name="Chillingworth T."/>
            <person name="Cronin A."/>
            <person name="Crossett B."/>
            <person name="Davis P."/>
            <person name="DeShazer D."/>
            <person name="Feltwell T."/>
            <person name="Fraser A."/>
            <person name="Hance Z."/>
            <person name="Hauser H."/>
            <person name="Holroyd S."/>
            <person name="Jagels K."/>
            <person name="Keith K.E."/>
            <person name="Maddison M."/>
            <person name="Moule S."/>
            <person name="Price C."/>
            <person name="Quail M.A."/>
            <person name="Rabbinowitsch E."/>
            <person name="Rutherford K."/>
            <person name="Sanders M."/>
            <person name="Simmonds M."/>
            <person name="Songsivilai S."/>
            <person name="Stevens K."/>
            <person name="Tumapa S."/>
            <person name="Vesaratchavest M."/>
            <person name="Whitehead S."/>
            <person name="Yeats C."/>
            <person name="Barrell B.G."/>
            <person name="Oyston P.C.F."/>
            <person name="Parkhill J."/>
        </authorList>
    </citation>
    <scope>NUCLEOTIDE SEQUENCE [LARGE SCALE GENOMIC DNA]</scope>
    <source>
        <strain>K96243</strain>
    </source>
</reference>
<feature type="chain" id="PRO_0000358071" description="NADH-quinone oxidoreductase subunit C">
    <location>
        <begin position="1"/>
        <end position="200"/>
    </location>
</feature>
<keyword id="KW-0997">Cell inner membrane</keyword>
<keyword id="KW-1003">Cell membrane</keyword>
<keyword id="KW-0472">Membrane</keyword>
<keyword id="KW-0520">NAD</keyword>
<keyword id="KW-0874">Quinone</keyword>
<keyword id="KW-1185">Reference proteome</keyword>
<keyword id="KW-1278">Translocase</keyword>
<keyword id="KW-0813">Transport</keyword>
<keyword id="KW-0830">Ubiquinone</keyword>
<sequence>MASKIETLKANLEAALGARAVSLVEAVGELTLVVKASDYLEVAKQLRDDRSLGFEQLIDLCGVDYQTYGDGAYDGPRFAAVLHLLSVANNWRLRVRVFASDDDLPIVPSVVDIWNSANWYEREAFDLYGIVFEGHPDLRRILTDYGFIGHPFRKDFPVSGYVEMRYDPQEKRVVYQPVTIEPREITPRVIREDRYGGLKH</sequence>
<dbReference type="EC" id="7.1.1.-" evidence="1"/>
<dbReference type="EMBL" id="BX571965">
    <property type="protein sequence ID" value="CAH35208.1"/>
    <property type="molecule type" value="Genomic_DNA"/>
</dbReference>
<dbReference type="RefSeq" id="WP_004186121.1">
    <property type="nucleotide sequence ID" value="NZ_CP009538.1"/>
</dbReference>
<dbReference type="RefSeq" id="YP_107835.1">
    <property type="nucleotide sequence ID" value="NC_006350.1"/>
</dbReference>
<dbReference type="SMR" id="Q63VN1"/>
<dbReference type="STRING" id="272560.BPSL1213"/>
<dbReference type="KEGG" id="bps:BPSL1213"/>
<dbReference type="PATRIC" id="fig|272560.51.peg.313"/>
<dbReference type="eggNOG" id="COG0852">
    <property type="taxonomic scope" value="Bacteria"/>
</dbReference>
<dbReference type="Proteomes" id="UP000000605">
    <property type="component" value="Chromosome 1"/>
</dbReference>
<dbReference type="GO" id="GO:0005886">
    <property type="term" value="C:plasma membrane"/>
    <property type="evidence" value="ECO:0007669"/>
    <property type="project" value="UniProtKB-SubCell"/>
</dbReference>
<dbReference type="GO" id="GO:0008137">
    <property type="term" value="F:NADH dehydrogenase (ubiquinone) activity"/>
    <property type="evidence" value="ECO:0007669"/>
    <property type="project" value="InterPro"/>
</dbReference>
<dbReference type="GO" id="GO:0050136">
    <property type="term" value="F:NADH:ubiquinone reductase (non-electrogenic) activity"/>
    <property type="evidence" value="ECO:0007669"/>
    <property type="project" value="UniProtKB-UniRule"/>
</dbReference>
<dbReference type="GO" id="GO:0048038">
    <property type="term" value="F:quinone binding"/>
    <property type="evidence" value="ECO:0007669"/>
    <property type="project" value="UniProtKB-KW"/>
</dbReference>
<dbReference type="Gene3D" id="3.30.460.80">
    <property type="entry name" value="NADH:ubiquinone oxidoreductase, 30kDa subunit"/>
    <property type="match status" value="1"/>
</dbReference>
<dbReference type="HAMAP" id="MF_01357">
    <property type="entry name" value="NDH1_NuoC"/>
    <property type="match status" value="1"/>
</dbReference>
<dbReference type="InterPro" id="IPR010218">
    <property type="entry name" value="NADH_DH_suC"/>
</dbReference>
<dbReference type="InterPro" id="IPR037232">
    <property type="entry name" value="NADH_quin_OxRdtase_su_C/D-like"/>
</dbReference>
<dbReference type="InterPro" id="IPR001268">
    <property type="entry name" value="NADH_UbQ_OxRdtase_30kDa_su"/>
</dbReference>
<dbReference type="InterPro" id="IPR020396">
    <property type="entry name" value="NADH_UbQ_OxRdtase_CS"/>
</dbReference>
<dbReference type="NCBIfam" id="TIGR01961">
    <property type="entry name" value="NuoC_fam"/>
    <property type="match status" value="1"/>
</dbReference>
<dbReference type="NCBIfam" id="NF004730">
    <property type="entry name" value="PRK06074.1-1"/>
    <property type="match status" value="1"/>
</dbReference>
<dbReference type="PANTHER" id="PTHR10884:SF14">
    <property type="entry name" value="NADH DEHYDROGENASE [UBIQUINONE] IRON-SULFUR PROTEIN 3, MITOCHONDRIAL"/>
    <property type="match status" value="1"/>
</dbReference>
<dbReference type="PANTHER" id="PTHR10884">
    <property type="entry name" value="NADH DEHYDROGENASE UBIQUINONE IRON-SULFUR PROTEIN 3"/>
    <property type="match status" value="1"/>
</dbReference>
<dbReference type="Pfam" id="PF00329">
    <property type="entry name" value="Complex1_30kDa"/>
    <property type="match status" value="1"/>
</dbReference>
<dbReference type="SUPFAM" id="SSF143243">
    <property type="entry name" value="Nqo5-like"/>
    <property type="match status" value="1"/>
</dbReference>
<dbReference type="PROSITE" id="PS00542">
    <property type="entry name" value="COMPLEX1_30K"/>
    <property type="match status" value="1"/>
</dbReference>
<organism>
    <name type="scientific">Burkholderia pseudomallei (strain K96243)</name>
    <dbReference type="NCBI Taxonomy" id="272560"/>
    <lineage>
        <taxon>Bacteria</taxon>
        <taxon>Pseudomonadati</taxon>
        <taxon>Pseudomonadota</taxon>
        <taxon>Betaproteobacteria</taxon>
        <taxon>Burkholderiales</taxon>
        <taxon>Burkholderiaceae</taxon>
        <taxon>Burkholderia</taxon>
        <taxon>pseudomallei group</taxon>
    </lineage>
</organism>
<accession>Q63VN1</accession>
<proteinExistence type="inferred from homology"/>
<comment type="function">
    <text evidence="1">NDH-1 shuttles electrons from NADH, via FMN and iron-sulfur (Fe-S) centers, to quinones in the respiratory chain. The immediate electron acceptor for the enzyme in this species is believed to be ubiquinone. Couples the redox reaction to proton translocation (for every two electrons transferred, four hydrogen ions are translocated across the cytoplasmic membrane), and thus conserves the redox energy in a proton gradient.</text>
</comment>
<comment type="catalytic activity">
    <reaction evidence="1">
        <text>a quinone + NADH + 5 H(+)(in) = a quinol + NAD(+) + 4 H(+)(out)</text>
        <dbReference type="Rhea" id="RHEA:57888"/>
        <dbReference type="ChEBI" id="CHEBI:15378"/>
        <dbReference type="ChEBI" id="CHEBI:24646"/>
        <dbReference type="ChEBI" id="CHEBI:57540"/>
        <dbReference type="ChEBI" id="CHEBI:57945"/>
        <dbReference type="ChEBI" id="CHEBI:132124"/>
    </reaction>
</comment>
<comment type="subunit">
    <text evidence="1">NDH-1 is composed of 14 different subunits. Subunits NuoB, C, D, E, F, and G constitute the peripheral sector of the complex.</text>
</comment>
<comment type="subcellular location">
    <subcellularLocation>
        <location evidence="1">Cell inner membrane</location>
        <topology evidence="1">Peripheral membrane protein</topology>
        <orientation evidence="1">Cytoplasmic side</orientation>
    </subcellularLocation>
</comment>
<comment type="similarity">
    <text evidence="1">Belongs to the complex I 30 kDa subunit family.</text>
</comment>